<proteinExistence type="predicted"/>
<feature type="chain" id="PRO_0000347001" description="TPR repeat-containing protein DDB_G0287999">
    <location>
        <begin position="1"/>
        <end position="1204"/>
    </location>
</feature>
<feature type="repeat" description="TPR 1">
    <location>
        <begin position="263"/>
        <end position="296"/>
    </location>
</feature>
<feature type="repeat" description="TPR 2">
    <location>
        <begin position="379"/>
        <end position="412"/>
    </location>
</feature>
<feature type="repeat" description="TPR 3">
    <location>
        <begin position="583"/>
        <end position="617"/>
    </location>
</feature>
<feature type="region of interest" description="Disordered" evidence="1">
    <location>
        <begin position="32"/>
        <end position="55"/>
    </location>
</feature>
<feature type="region of interest" description="Disordered" evidence="1">
    <location>
        <begin position="360"/>
        <end position="387"/>
    </location>
</feature>
<feature type="region of interest" description="Disordered" evidence="1">
    <location>
        <begin position="639"/>
        <end position="660"/>
    </location>
</feature>
<feature type="region of interest" description="Disordered" evidence="1">
    <location>
        <begin position="761"/>
        <end position="797"/>
    </location>
</feature>
<feature type="compositionally biased region" description="Low complexity" evidence="1">
    <location>
        <begin position="32"/>
        <end position="48"/>
    </location>
</feature>
<feature type="compositionally biased region" description="Low complexity" evidence="1">
    <location>
        <begin position="374"/>
        <end position="387"/>
    </location>
</feature>
<feature type="compositionally biased region" description="Low complexity" evidence="1">
    <location>
        <begin position="766"/>
        <end position="778"/>
    </location>
</feature>
<name>Y7728_DICDI</name>
<accession>Q54JK1</accession>
<sequence length="1204" mass="141007">MITLRKSLSKSCKDLRILNGTTYVKGFCSTTTTDTTTTTSTSTTTDTDTNSEKSNKEKLFHQINELTKQSSFNKVLFYKKSAHETEGYSYKERQQFKQKQQKIKQIKHNQQLKQKQQIEQQKQKKLEQQQQQQQLELEKKQKFEQQLEQQQREQNQISLLEKSKDLESINDFGDFDFRELETKPLFSVPNVLINYLENEKTLSDHQKSDVVGSFYSDGEIPSVPHINLEEYTRSVLIEAYLEVCKPEYAFYYFKQSENNKTNSKGLLLMIEFYIKIGDIDSAFKFFEVNFKDYKDLISTNDYYKLFNGLITYSIDNQENIFDIKNKFFNVIINDNINNDIEKFNVGSLASMIESITPKYQPPPQEQQLMDDDSNSNSNNDSNNIIKNSSSKLEFNDDCVSNYKKLVNFDQLYSIYKNNYKKYTSDQRLIILSCILKYSIITADIELFLNTVNRVLVKDGIEKVEIPILQILFEAYTHTIPSDKPELVGQLKYLLTNYIKDMDSSDNGYKSISKLIAYNFSFKGDIKNSIYDQLCGIGIKSIEIDIENNIENSVLINKLKQEQREKERNQFIIFIQSIFPEDRIQHFVETALIYLINDNSYQEAVKLYIYFLKEGSVTGIDIFLKYHELSYKNIVYNNNNNNNNNNNNNNNNNNNNNNNNNIKNFTTFSENDHKTLKTFWERIKNNYVNNNNKQQQQEERDIENEFIFIGKGEINNDQLLEKFQYIKEFRNIKSFFNSYEENLNPNDFINYIKNIINKVNDDDNDNDNNNNNNNNNNNNNDDDDGGGHGGGDVFKTTTPKKVKPLISTIQKSQNELPTTTTYKEIIENTSFFRNQQYNFNRELSSTLNSPKSRLDLERLQSFLNCKSHTESMSFQQLCICLELVGDTGFKYDFYKNLNHIQKTLIITPQLCKNLFSTVTMDESIDILRRGLSRISPENLKSLGIWDGVFQGLLKDPLKTPLANFLMYNGFISKSSFDRYSYCQQIINTDIDAYYFFLDPSISYYDTFGGDIEDASNYNLKKDSSKTFFKPMEDFFITYLDTFFKASSPHEISQRPDYQTQFSNYTILSLIRLGKLNEAFKEIESLSPAKYNATTIGLVVFIYSKRYKQDKSKFLVEIQSLIQRIIFDLENKMGSEDARSYFHKYILKSLIINYGNIEMDNLIANVDVPKVLKDIDNSLAPNFDRRLIRKLFKVRGYIKYRFYRLN</sequence>
<evidence type="ECO:0000256" key="1">
    <source>
        <dbReference type="SAM" id="MobiDB-lite"/>
    </source>
</evidence>
<protein>
    <recommendedName>
        <fullName>TPR repeat-containing protein DDB_G0287999</fullName>
    </recommendedName>
</protein>
<reference key="1">
    <citation type="journal article" date="2005" name="Nature">
        <title>The genome of the social amoeba Dictyostelium discoideum.</title>
        <authorList>
            <person name="Eichinger L."/>
            <person name="Pachebat J.A."/>
            <person name="Gloeckner G."/>
            <person name="Rajandream M.A."/>
            <person name="Sucgang R."/>
            <person name="Berriman M."/>
            <person name="Song J."/>
            <person name="Olsen R."/>
            <person name="Szafranski K."/>
            <person name="Xu Q."/>
            <person name="Tunggal B."/>
            <person name="Kummerfeld S."/>
            <person name="Madera M."/>
            <person name="Konfortov B.A."/>
            <person name="Rivero F."/>
            <person name="Bankier A.T."/>
            <person name="Lehmann R."/>
            <person name="Hamlin N."/>
            <person name="Davies R."/>
            <person name="Gaudet P."/>
            <person name="Fey P."/>
            <person name="Pilcher K."/>
            <person name="Chen G."/>
            <person name="Saunders D."/>
            <person name="Sodergren E.J."/>
            <person name="Davis P."/>
            <person name="Kerhornou A."/>
            <person name="Nie X."/>
            <person name="Hall N."/>
            <person name="Anjard C."/>
            <person name="Hemphill L."/>
            <person name="Bason N."/>
            <person name="Farbrother P."/>
            <person name="Desany B."/>
            <person name="Just E."/>
            <person name="Morio T."/>
            <person name="Rost R."/>
            <person name="Churcher C.M."/>
            <person name="Cooper J."/>
            <person name="Haydock S."/>
            <person name="van Driessche N."/>
            <person name="Cronin A."/>
            <person name="Goodhead I."/>
            <person name="Muzny D.M."/>
            <person name="Mourier T."/>
            <person name="Pain A."/>
            <person name="Lu M."/>
            <person name="Harper D."/>
            <person name="Lindsay R."/>
            <person name="Hauser H."/>
            <person name="James K.D."/>
            <person name="Quiles M."/>
            <person name="Madan Babu M."/>
            <person name="Saito T."/>
            <person name="Buchrieser C."/>
            <person name="Wardroper A."/>
            <person name="Felder M."/>
            <person name="Thangavelu M."/>
            <person name="Johnson D."/>
            <person name="Knights A."/>
            <person name="Loulseged H."/>
            <person name="Mungall K.L."/>
            <person name="Oliver K."/>
            <person name="Price C."/>
            <person name="Quail M.A."/>
            <person name="Urushihara H."/>
            <person name="Hernandez J."/>
            <person name="Rabbinowitsch E."/>
            <person name="Steffen D."/>
            <person name="Sanders M."/>
            <person name="Ma J."/>
            <person name="Kohara Y."/>
            <person name="Sharp S."/>
            <person name="Simmonds M.N."/>
            <person name="Spiegler S."/>
            <person name="Tivey A."/>
            <person name="Sugano S."/>
            <person name="White B."/>
            <person name="Walker D."/>
            <person name="Woodward J.R."/>
            <person name="Winckler T."/>
            <person name="Tanaka Y."/>
            <person name="Shaulsky G."/>
            <person name="Schleicher M."/>
            <person name="Weinstock G.M."/>
            <person name="Rosenthal A."/>
            <person name="Cox E.C."/>
            <person name="Chisholm R.L."/>
            <person name="Gibbs R.A."/>
            <person name="Loomis W.F."/>
            <person name="Platzer M."/>
            <person name="Kay R.R."/>
            <person name="Williams J.G."/>
            <person name="Dear P.H."/>
            <person name="Noegel A.A."/>
            <person name="Barrell B.G."/>
            <person name="Kuspa A."/>
        </authorList>
    </citation>
    <scope>NUCLEOTIDE SEQUENCE [LARGE SCALE GENOMIC DNA]</scope>
    <source>
        <strain>AX4</strain>
    </source>
</reference>
<dbReference type="EMBL" id="AAFI02000107">
    <property type="protein sequence ID" value="EAL63425.1"/>
    <property type="molecule type" value="Genomic_DNA"/>
</dbReference>
<dbReference type="RefSeq" id="XP_636930.1">
    <property type="nucleotide sequence ID" value="XM_631838.1"/>
</dbReference>
<dbReference type="SMR" id="Q54JK1"/>
<dbReference type="STRING" id="44689.Q54JK1"/>
<dbReference type="PaxDb" id="44689-DDB0187728"/>
<dbReference type="EnsemblProtists" id="EAL63425">
    <property type="protein sequence ID" value="EAL63425"/>
    <property type="gene ID" value="DDB_G0287999"/>
</dbReference>
<dbReference type="GeneID" id="8626405"/>
<dbReference type="KEGG" id="ddi:DDB_G0287999"/>
<dbReference type="dictyBase" id="DDB_G0287999"/>
<dbReference type="VEuPathDB" id="AmoebaDB:DDB_G0287999"/>
<dbReference type="HOGENOM" id="CLU_270461_0_0_1"/>
<dbReference type="InParanoid" id="Q54JK1"/>
<dbReference type="PRO" id="PR:Q54JK1"/>
<dbReference type="Proteomes" id="UP000002195">
    <property type="component" value="Chromosome 5"/>
</dbReference>
<dbReference type="InterPro" id="IPR052292">
    <property type="entry name" value="Glucose_repression_reg"/>
</dbReference>
<dbReference type="PANTHER" id="PTHR28051">
    <property type="entry name" value="PROTEIN MTL1-RELATED"/>
    <property type="match status" value="1"/>
</dbReference>
<dbReference type="PANTHER" id="PTHR28051:SF1">
    <property type="entry name" value="PROTEIN MTL1-RELATED"/>
    <property type="match status" value="1"/>
</dbReference>
<organism>
    <name type="scientific">Dictyostelium discoideum</name>
    <name type="common">Social amoeba</name>
    <dbReference type="NCBI Taxonomy" id="44689"/>
    <lineage>
        <taxon>Eukaryota</taxon>
        <taxon>Amoebozoa</taxon>
        <taxon>Evosea</taxon>
        <taxon>Eumycetozoa</taxon>
        <taxon>Dictyostelia</taxon>
        <taxon>Dictyosteliales</taxon>
        <taxon>Dictyosteliaceae</taxon>
        <taxon>Dictyostelium</taxon>
    </lineage>
</organism>
<keyword id="KW-1185">Reference proteome</keyword>
<keyword id="KW-0677">Repeat</keyword>
<keyword id="KW-0802">TPR repeat</keyword>
<gene>
    <name type="ORF">DDB_G0287999</name>
</gene>